<name>SYR_ORITB</name>
<accession>A5CD00</accession>
<comment type="catalytic activity">
    <reaction evidence="1">
        <text>tRNA(Arg) + L-arginine + ATP = L-arginyl-tRNA(Arg) + AMP + diphosphate</text>
        <dbReference type="Rhea" id="RHEA:20301"/>
        <dbReference type="Rhea" id="RHEA-COMP:9658"/>
        <dbReference type="Rhea" id="RHEA-COMP:9673"/>
        <dbReference type="ChEBI" id="CHEBI:30616"/>
        <dbReference type="ChEBI" id="CHEBI:32682"/>
        <dbReference type="ChEBI" id="CHEBI:33019"/>
        <dbReference type="ChEBI" id="CHEBI:78442"/>
        <dbReference type="ChEBI" id="CHEBI:78513"/>
        <dbReference type="ChEBI" id="CHEBI:456215"/>
        <dbReference type="EC" id="6.1.1.19"/>
    </reaction>
</comment>
<comment type="subunit">
    <text evidence="1">Monomer.</text>
</comment>
<comment type="subcellular location">
    <subcellularLocation>
        <location evidence="1">Cytoplasm</location>
    </subcellularLocation>
</comment>
<comment type="similarity">
    <text evidence="1">Belongs to the class-I aminoacyl-tRNA synthetase family.</text>
</comment>
<feature type="chain" id="PRO_1000018081" description="Arginine--tRNA ligase">
    <location>
        <begin position="1"/>
        <end position="590"/>
    </location>
</feature>
<feature type="short sequence motif" description="'HIGH' region">
    <location>
        <begin position="138"/>
        <end position="148"/>
    </location>
</feature>
<keyword id="KW-0030">Aminoacyl-tRNA synthetase</keyword>
<keyword id="KW-0067">ATP-binding</keyword>
<keyword id="KW-0963">Cytoplasm</keyword>
<keyword id="KW-0436">Ligase</keyword>
<keyword id="KW-0547">Nucleotide-binding</keyword>
<keyword id="KW-0648">Protein biosynthesis</keyword>
<keyword id="KW-1185">Reference proteome</keyword>
<protein>
    <recommendedName>
        <fullName evidence="1">Arginine--tRNA ligase</fullName>
        <ecNumber evidence="1">6.1.1.19</ecNumber>
    </recommendedName>
    <alternativeName>
        <fullName evidence="1">Arginyl-tRNA synthetase</fullName>
        <shortName evidence="1">ArgRS</shortName>
    </alternativeName>
</protein>
<organism>
    <name type="scientific">Orientia tsutsugamushi (strain Boryong)</name>
    <name type="common">Rickettsia tsutsugamushi</name>
    <dbReference type="NCBI Taxonomy" id="357244"/>
    <lineage>
        <taxon>Bacteria</taxon>
        <taxon>Pseudomonadati</taxon>
        <taxon>Pseudomonadota</taxon>
        <taxon>Alphaproteobacteria</taxon>
        <taxon>Rickettsiales</taxon>
        <taxon>Rickettsiaceae</taxon>
        <taxon>Rickettsieae</taxon>
        <taxon>Orientia</taxon>
    </lineage>
</organism>
<proteinExistence type="inferred from homology"/>
<gene>
    <name evidence="1" type="primary">argS</name>
    <name type="ordered locus">OTBS_0571</name>
</gene>
<evidence type="ECO:0000255" key="1">
    <source>
        <dbReference type="HAMAP-Rule" id="MF_00123"/>
    </source>
</evidence>
<reference key="1">
    <citation type="journal article" date="2007" name="Proc. Natl. Acad. Sci. U.S.A.">
        <title>The Orientia tsutsugamushi genome reveals massive proliferation of conjugative type IV secretion system and host-cell interaction genes.</title>
        <authorList>
            <person name="Cho N.-H."/>
            <person name="Kim H.-R."/>
            <person name="Lee J.-H."/>
            <person name="Kim S.-Y."/>
            <person name="Kim J."/>
            <person name="Cha S."/>
            <person name="Kim S.-Y."/>
            <person name="Darby A.C."/>
            <person name="Fuxelius H.-H."/>
            <person name="Yin J."/>
            <person name="Kim J.H."/>
            <person name="Kim J."/>
            <person name="Lee S.J."/>
            <person name="Koh Y.-S."/>
            <person name="Jang W.-J."/>
            <person name="Park K.-H."/>
            <person name="Andersson S.G.E."/>
            <person name="Choi M.-S."/>
            <person name="Kim I.-S."/>
        </authorList>
    </citation>
    <scope>NUCLEOTIDE SEQUENCE [LARGE SCALE GENOMIC DNA]</scope>
    <source>
        <strain>Boryong</strain>
    </source>
</reference>
<sequence>MNIYKRLKQDIDVVATSIINKLKSTSDSKEFDSLNDTIPIVLESSKDVNSYDISTNIAMLIAKKMNQNSITLANLFKKKLSHYPYIDNITIAGPGFINFVILQEEWTNYLAIILDGSYRKEYSSIGNNKKVNIEYVSANPTGPLHIGHARAAVYGDVLAALLQCTGYQVTREYYVNDTGVQIDNLAKSVYLRYKQVITGQVADIPKGLYPGEYLISVGTKLAKEYGDKLLTLSEPEYLNIIKDVAVNNLLQSIKADLALIGVRHDVFFSEKKLHDSNVISKVIDLLSVKKLVYTGELSQPKGQSSDNWQPRSQLLFKSTIFGDNQDRPLQKEDGSWSYFASDIAYADNKIKRGFDYVIFILGADHIGYVSRIKAIIQALDFNQDITLDIKICQLVKLIENGVAVKMSKRSGSFTTIRDVYEIVGKDVIRFFMLTRKNNAVLDFDLVKLQEQSRDNPVFYVQYAYVRAGSILRKAKDNANIAYEIFSTNKSDFSLLSTKEELNLIKILAVWSHMLDGAVKNFEPHRIAIYLQKLAAEFHALWNLKSNDLDYRFIVLNDNNLTAARLALATAVREIIREGLKIIGITCVEVM</sequence>
<dbReference type="EC" id="6.1.1.19" evidence="1"/>
<dbReference type="EMBL" id="AM494475">
    <property type="protein sequence ID" value="CAM79637.1"/>
    <property type="molecule type" value="Genomic_DNA"/>
</dbReference>
<dbReference type="RefSeq" id="WP_011944550.1">
    <property type="nucleotide sequence ID" value="NC_009488.1"/>
</dbReference>
<dbReference type="SMR" id="A5CD00"/>
<dbReference type="KEGG" id="ots:OTBS_0571"/>
<dbReference type="eggNOG" id="COG0018">
    <property type="taxonomic scope" value="Bacteria"/>
</dbReference>
<dbReference type="HOGENOM" id="CLU_006406_0_1_5"/>
<dbReference type="Proteomes" id="UP000001565">
    <property type="component" value="Chromosome"/>
</dbReference>
<dbReference type="GO" id="GO:0005737">
    <property type="term" value="C:cytoplasm"/>
    <property type="evidence" value="ECO:0007669"/>
    <property type="project" value="UniProtKB-SubCell"/>
</dbReference>
<dbReference type="GO" id="GO:0004814">
    <property type="term" value="F:arginine-tRNA ligase activity"/>
    <property type="evidence" value="ECO:0007669"/>
    <property type="project" value="UniProtKB-UniRule"/>
</dbReference>
<dbReference type="GO" id="GO:0005524">
    <property type="term" value="F:ATP binding"/>
    <property type="evidence" value="ECO:0007669"/>
    <property type="project" value="UniProtKB-UniRule"/>
</dbReference>
<dbReference type="GO" id="GO:0006420">
    <property type="term" value="P:arginyl-tRNA aminoacylation"/>
    <property type="evidence" value="ECO:0007669"/>
    <property type="project" value="UniProtKB-UniRule"/>
</dbReference>
<dbReference type="CDD" id="cd00671">
    <property type="entry name" value="ArgRS_core"/>
    <property type="match status" value="1"/>
</dbReference>
<dbReference type="Gene3D" id="3.30.1360.70">
    <property type="entry name" value="Arginyl tRNA synthetase N-terminal domain"/>
    <property type="match status" value="1"/>
</dbReference>
<dbReference type="Gene3D" id="3.40.50.620">
    <property type="entry name" value="HUPs"/>
    <property type="match status" value="1"/>
</dbReference>
<dbReference type="Gene3D" id="1.10.730.10">
    <property type="entry name" value="Isoleucyl-tRNA Synthetase, Domain 1"/>
    <property type="match status" value="1"/>
</dbReference>
<dbReference type="HAMAP" id="MF_00123">
    <property type="entry name" value="Arg_tRNA_synth"/>
    <property type="match status" value="1"/>
</dbReference>
<dbReference type="InterPro" id="IPR001412">
    <property type="entry name" value="aa-tRNA-synth_I_CS"/>
</dbReference>
<dbReference type="InterPro" id="IPR001278">
    <property type="entry name" value="Arg-tRNA-ligase"/>
</dbReference>
<dbReference type="InterPro" id="IPR005148">
    <property type="entry name" value="Arg-tRNA-synth_N"/>
</dbReference>
<dbReference type="InterPro" id="IPR036695">
    <property type="entry name" value="Arg-tRNA-synth_N_sf"/>
</dbReference>
<dbReference type="InterPro" id="IPR035684">
    <property type="entry name" value="ArgRS_core"/>
</dbReference>
<dbReference type="InterPro" id="IPR008909">
    <property type="entry name" value="DALR_anticod-bd"/>
</dbReference>
<dbReference type="InterPro" id="IPR014729">
    <property type="entry name" value="Rossmann-like_a/b/a_fold"/>
</dbReference>
<dbReference type="InterPro" id="IPR009080">
    <property type="entry name" value="tRNAsynth_Ia_anticodon-bd"/>
</dbReference>
<dbReference type="NCBIfam" id="TIGR00456">
    <property type="entry name" value="argS"/>
    <property type="match status" value="1"/>
</dbReference>
<dbReference type="PANTHER" id="PTHR11956:SF5">
    <property type="entry name" value="ARGININE--TRNA LIGASE, CYTOPLASMIC"/>
    <property type="match status" value="1"/>
</dbReference>
<dbReference type="PANTHER" id="PTHR11956">
    <property type="entry name" value="ARGINYL-TRNA SYNTHETASE"/>
    <property type="match status" value="1"/>
</dbReference>
<dbReference type="Pfam" id="PF03485">
    <property type="entry name" value="Arg_tRNA_synt_N"/>
    <property type="match status" value="1"/>
</dbReference>
<dbReference type="Pfam" id="PF05746">
    <property type="entry name" value="DALR_1"/>
    <property type="match status" value="1"/>
</dbReference>
<dbReference type="Pfam" id="PF00750">
    <property type="entry name" value="tRNA-synt_1d"/>
    <property type="match status" value="1"/>
</dbReference>
<dbReference type="PRINTS" id="PR01038">
    <property type="entry name" value="TRNASYNTHARG"/>
</dbReference>
<dbReference type="SMART" id="SM01016">
    <property type="entry name" value="Arg_tRNA_synt_N"/>
    <property type="match status" value="1"/>
</dbReference>
<dbReference type="SMART" id="SM00836">
    <property type="entry name" value="DALR_1"/>
    <property type="match status" value="1"/>
</dbReference>
<dbReference type="SUPFAM" id="SSF47323">
    <property type="entry name" value="Anticodon-binding domain of a subclass of class I aminoacyl-tRNA synthetases"/>
    <property type="match status" value="1"/>
</dbReference>
<dbReference type="SUPFAM" id="SSF55190">
    <property type="entry name" value="Arginyl-tRNA synthetase (ArgRS), N-terminal 'additional' domain"/>
    <property type="match status" value="1"/>
</dbReference>
<dbReference type="SUPFAM" id="SSF52374">
    <property type="entry name" value="Nucleotidylyl transferase"/>
    <property type="match status" value="1"/>
</dbReference>
<dbReference type="PROSITE" id="PS00178">
    <property type="entry name" value="AA_TRNA_LIGASE_I"/>
    <property type="match status" value="1"/>
</dbReference>